<proteinExistence type="evidence at protein level"/>
<evidence type="ECO:0000255" key="1">
    <source>
        <dbReference type="HAMAP-Rule" id="MF_00114"/>
    </source>
</evidence>
<evidence type="ECO:0000269" key="2">
    <source>
    </source>
</evidence>
<evidence type="ECO:0000303" key="3">
    <source>
    </source>
</evidence>
<organism>
    <name type="scientific">Thermococcus kodakarensis (strain ATCC BAA-918 / JCM 12380 / KOD1)</name>
    <name type="common">Pyrococcus kodakaraensis (strain KOD1)</name>
    <dbReference type="NCBI Taxonomy" id="69014"/>
    <lineage>
        <taxon>Archaea</taxon>
        <taxon>Methanobacteriati</taxon>
        <taxon>Methanobacteriota</taxon>
        <taxon>Thermococci</taxon>
        <taxon>Thermococcales</taxon>
        <taxon>Thermococcaceae</taxon>
        <taxon>Thermococcus</taxon>
    </lineage>
</organism>
<protein>
    <recommendedName>
        <fullName evidence="1">Deoxyribose-phosphate aldolase</fullName>
        <shortName evidence="1 3">DERA</shortName>
        <ecNumber evidence="1 2">4.1.2.4</ecNumber>
    </recommendedName>
    <alternativeName>
        <fullName evidence="1 3">2-deoxy-D-ribose 5-phosphate aldolase</fullName>
    </alternativeName>
    <alternativeName>
        <fullName evidence="1">Phosphodeoxyriboaldolase</fullName>
        <shortName evidence="1">Deoxyriboaldolase</shortName>
    </alternativeName>
</protein>
<name>DEOC_THEKO</name>
<sequence length="224" mass="24506">MNKREIARYIDQTNLKPYATKEDIIKLCDEAIEYGFYAVCVNPYRVKLAKDYLREKNADVKVASVIGFPLGATPTEVKVFEAKRALEDGADELDMVINIGALKDKDYEYVKNDIAEVVKVAHERGAKVKVIIETCYLTEEEKVKACELAKEAGADFVKTSTGFGTGGATVEDVRLMRKVVGPEMGVKAAGGIRTYEQALEMIEAGANRIGTSSGVKIVEGAPDE</sequence>
<gene>
    <name evidence="1" type="primary">deoC</name>
    <name type="ordered locus">TK2104</name>
</gene>
<keyword id="KW-0963">Cytoplasm</keyword>
<keyword id="KW-0903">Direct protein sequencing</keyword>
<keyword id="KW-0456">Lyase</keyword>
<keyword id="KW-1185">Reference proteome</keyword>
<keyword id="KW-0704">Schiff base</keyword>
<comment type="function">
    <text evidence="2">Catalyzes a reversible aldol reaction between acetaldehyde and D-glyceraldehyde 3-phosphate to generate 2-deoxy-D-ribose 5-phosphate. Could be involved in pentose biosynthesis.</text>
</comment>
<comment type="catalytic activity">
    <reaction evidence="1 2">
        <text>2-deoxy-D-ribose 5-phosphate = D-glyceraldehyde 3-phosphate + acetaldehyde</text>
        <dbReference type="Rhea" id="RHEA:12821"/>
        <dbReference type="ChEBI" id="CHEBI:15343"/>
        <dbReference type="ChEBI" id="CHEBI:59776"/>
        <dbReference type="ChEBI" id="CHEBI:62877"/>
        <dbReference type="EC" id="4.1.2.4"/>
    </reaction>
</comment>
<comment type="activity regulation">
    <text evidence="2">Activated by citrate. Inhibited by NaBH(4). Activity is independent of divalent metal cations.</text>
</comment>
<comment type="biophysicochemical properties">
    <kinetics>
        <KM evidence="2">0.81 mM for 2-deoxy-D-ribose 5-phosphate (at 95 degrees Celsius)</KM>
        <Vmax evidence="2">285.0 umol/min/mg enzyme (at 95 degrees Celsius)</Vmax>
        <text evidence="2">kcat is 116 sec(-1) (at 95 degrees Celsius).</text>
    </kinetics>
    <phDependence>
        <text evidence="2">Optimum pH is 4.0.</text>
    </phDependence>
    <temperatureDependence>
        <text evidence="2">Optimum temperature is 95 degrees Celsius.</text>
    </temperatureDependence>
</comment>
<comment type="subunit">
    <text evidence="2">Homodimer.</text>
</comment>
<comment type="subcellular location">
    <subcellularLocation>
        <location evidence="1">Cytoplasm</location>
    </subcellularLocation>
</comment>
<comment type="similarity">
    <text evidence="1">Belongs to the DeoC/FbaB aldolase family. DeoC type 1 subfamily.</text>
</comment>
<reference key="1">
    <citation type="journal article" date="2004" name="J. Bacteriol.">
        <title>Presence of a novel phosphopentomutase and a 2-deoxyribose 5-phosphate aldolase reveals a metabolic link between pentoses and central carbon metabolism in the hyperthermophilic archaeon Thermococcus kodakaraensis.</title>
        <authorList>
            <person name="Rashid N."/>
            <person name="Imanaka H."/>
            <person name="Fukui T."/>
            <person name="Atomi H."/>
            <person name="Imanaka T."/>
        </authorList>
    </citation>
    <scope>NUCLEOTIDE SEQUENCE [GENOMIC DNA]</scope>
    <scope>PROTEIN SEQUENCE OF 1-10</scope>
    <scope>FUNCTION</scope>
    <scope>CATALYTIC ACTIVITY</scope>
    <scope>ACTIVITY REGULATION</scope>
    <scope>BIOPHYSICOCHEMICAL PROPERTIES</scope>
    <scope>SUBUNIT</scope>
    <source>
        <strain>ATCC BAA-918 / JCM 12380 / KOD1</strain>
    </source>
</reference>
<reference key="2">
    <citation type="journal article" date="2005" name="Genome Res.">
        <title>Complete genome sequence of the hyperthermophilic archaeon Thermococcus kodakaraensis KOD1 and comparison with Pyrococcus genomes.</title>
        <authorList>
            <person name="Fukui T."/>
            <person name="Atomi H."/>
            <person name="Kanai T."/>
            <person name="Matsumi R."/>
            <person name="Fujiwara S."/>
            <person name="Imanaka T."/>
        </authorList>
    </citation>
    <scope>NUCLEOTIDE SEQUENCE [LARGE SCALE GENOMIC DNA]</scope>
    <source>
        <strain>ATCC BAA-918 / JCM 12380 / KOD1</strain>
    </source>
</reference>
<accession>Q877I0</accession>
<dbReference type="EC" id="4.1.2.4" evidence="1 2"/>
<dbReference type="EMBL" id="AB092961">
    <property type="protein sequence ID" value="BAC67708.1"/>
    <property type="molecule type" value="Genomic_DNA"/>
</dbReference>
<dbReference type="EMBL" id="AP006878">
    <property type="protein sequence ID" value="BAD86293.1"/>
    <property type="molecule type" value="Genomic_DNA"/>
</dbReference>
<dbReference type="RefSeq" id="WP_011251054.1">
    <property type="nucleotide sequence ID" value="NC_006624.1"/>
</dbReference>
<dbReference type="SMR" id="Q877I0"/>
<dbReference type="STRING" id="69014.TK2104"/>
<dbReference type="EnsemblBacteria" id="BAD86293">
    <property type="protein sequence ID" value="BAD86293"/>
    <property type="gene ID" value="TK2104"/>
</dbReference>
<dbReference type="GeneID" id="78448639"/>
<dbReference type="KEGG" id="tko:TK2104"/>
<dbReference type="PATRIC" id="fig|69014.16.peg.2059"/>
<dbReference type="eggNOG" id="arCOG04320">
    <property type="taxonomic scope" value="Archaea"/>
</dbReference>
<dbReference type="HOGENOM" id="CLU_053595_0_2_2"/>
<dbReference type="InParanoid" id="Q877I0"/>
<dbReference type="OrthoDB" id="31145at2157"/>
<dbReference type="PhylomeDB" id="Q877I0"/>
<dbReference type="BRENDA" id="4.1.2.4">
    <property type="organism ID" value="5246"/>
</dbReference>
<dbReference type="Proteomes" id="UP000000536">
    <property type="component" value="Chromosome"/>
</dbReference>
<dbReference type="GO" id="GO:0005737">
    <property type="term" value="C:cytoplasm"/>
    <property type="evidence" value="ECO:0007669"/>
    <property type="project" value="UniProtKB-SubCell"/>
</dbReference>
<dbReference type="GO" id="GO:0004139">
    <property type="term" value="F:deoxyribose-phosphate aldolase activity"/>
    <property type="evidence" value="ECO:0000318"/>
    <property type="project" value="GO_Central"/>
</dbReference>
<dbReference type="GO" id="GO:0006018">
    <property type="term" value="P:2-deoxyribose 1-phosphate catabolic process"/>
    <property type="evidence" value="ECO:0007669"/>
    <property type="project" value="UniProtKB-UniRule"/>
</dbReference>
<dbReference type="GO" id="GO:0016052">
    <property type="term" value="P:carbohydrate catabolic process"/>
    <property type="evidence" value="ECO:0000318"/>
    <property type="project" value="GO_Central"/>
</dbReference>
<dbReference type="GO" id="GO:0009264">
    <property type="term" value="P:deoxyribonucleotide catabolic process"/>
    <property type="evidence" value="ECO:0000318"/>
    <property type="project" value="GO_Central"/>
</dbReference>
<dbReference type="CDD" id="cd00959">
    <property type="entry name" value="DeoC"/>
    <property type="match status" value="1"/>
</dbReference>
<dbReference type="FunFam" id="3.20.20.70:FF:000044">
    <property type="entry name" value="Deoxyribose-phosphate aldolase"/>
    <property type="match status" value="1"/>
</dbReference>
<dbReference type="Gene3D" id="3.20.20.70">
    <property type="entry name" value="Aldolase class I"/>
    <property type="match status" value="1"/>
</dbReference>
<dbReference type="HAMAP" id="MF_00114">
    <property type="entry name" value="DeoC_type1"/>
    <property type="match status" value="1"/>
</dbReference>
<dbReference type="InterPro" id="IPR013785">
    <property type="entry name" value="Aldolase_TIM"/>
</dbReference>
<dbReference type="InterPro" id="IPR011343">
    <property type="entry name" value="DeoC"/>
</dbReference>
<dbReference type="InterPro" id="IPR002915">
    <property type="entry name" value="DeoC/FbaB/LacD_aldolase"/>
</dbReference>
<dbReference type="InterPro" id="IPR028581">
    <property type="entry name" value="DeoC_typeI"/>
</dbReference>
<dbReference type="NCBIfam" id="TIGR00126">
    <property type="entry name" value="deoC"/>
    <property type="match status" value="1"/>
</dbReference>
<dbReference type="PANTHER" id="PTHR10889">
    <property type="entry name" value="DEOXYRIBOSE-PHOSPHATE ALDOLASE"/>
    <property type="match status" value="1"/>
</dbReference>
<dbReference type="PANTHER" id="PTHR10889:SF1">
    <property type="entry name" value="DEOXYRIBOSE-PHOSPHATE ALDOLASE"/>
    <property type="match status" value="1"/>
</dbReference>
<dbReference type="Pfam" id="PF01791">
    <property type="entry name" value="DeoC"/>
    <property type="match status" value="1"/>
</dbReference>
<dbReference type="PIRSF" id="PIRSF001357">
    <property type="entry name" value="DeoC"/>
    <property type="match status" value="1"/>
</dbReference>
<dbReference type="SMART" id="SM01133">
    <property type="entry name" value="DeoC"/>
    <property type="match status" value="1"/>
</dbReference>
<dbReference type="SUPFAM" id="SSF51569">
    <property type="entry name" value="Aldolase"/>
    <property type="match status" value="1"/>
</dbReference>
<feature type="chain" id="PRO_0000057291" description="Deoxyribose-phosphate aldolase">
    <location>
        <begin position="1"/>
        <end position="224"/>
    </location>
</feature>
<feature type="active site" description="Proton donor/acceptor" evidence="1">
    <location>
        <position position="94"/>
    </location>
</feature>
<feature type="active site" description="Schiff-base intermediate with acetaldehyde" evidence="1">
    <location>
        <position position="158"/>
    </location>
</feature>
<feature type="active site" description="Proton donor/acceptor" evidence="1">
    <location>
        <position position="187"/>
    </location>
</feature>